<dbReference type="EMBL" id="CP001283">
    <property type="protein sequence ID" value="ACK92313.1"/>
    <property type="molecule type" value="Genomic_DNA"/>
</dbReference>
<dbReference type="RefSeq" id="WP_000990712.1">
    <property type="nucleotide sequence ID" value="NC_011773.1"/>
</dbReference>
<dbReference type="SMR" id="B7JJ59"/>
<dbReference type="KEGG" id="bcu:BCAH820_3793"/>
<dbReference type="HOGENOM" id="CLU_030805_9_3_9"/>
<dbReference type="Proteomes" id="UP000001363">
    <property type="component" value="Chromosome"/>
</dbReference>
<dbReference type="CDD" id="cd00885">
    <property type="entry name" value="cinA"/>
    <property type="match status" value="1"/>
</dbReference>
<dbReference type="Gene3D" id="3.30.70.2860">
    <property type="match status" value="1"/>
</dbReference>
<dbReference type="Gene3D" id="3.90.950.20">
    <property type="entry name" value="CinA-like"/>
    <property type="match status" value="1"/>
</dbReference>
<dbReference type="Gene3D" id="3.40.980.10">
    <property type="entry name" value="MoaB/Mog-like domain"/>
    <property type="match status" value="1"/>
</dbReference>
<dbReference type="HAMAP" id="MF_00226_B">
    <property type="entry name" value="CinA_B"/>
    <property type="match status" value="1"/>
</dbReference>
<dbReference type="InterPro" id="IPR050101">
    <property type="entry name" value="CinA"/>
</dbReference>
<dbReference type="InterPro" id="IPR036653">
    <property type="entry name" value="CinA-like_C"/>
</dbReference>
<dbReference type="InterPro" id="IPR008136">
    <property type="entry name" value="CinA_C"/>
</dbReference>
<dbReference type="InterPro" id="IPR041424">
    <property type="entry name" value="CinA_KH"/>
</dbReference>
<dbReference type="InterPro" id="IPR008135">
    <property type="entry name" value="Competence-induced_CinA"/>
</dbReference>
<dbReference type="InterPro" id="IPR036425">
    <property type="entry name" value="MoaB/Mog-like_dom_sf"/>
</dbReference>
<dbReference type="InterPro" id="IPR001453">
    <property type="entry name" value="MoaB/Mog_dom"/>
</dbReference>
<dbReference type="NCBIfam" id="TIGR00200">
    <property type="entry name" value="cinA_nterm"/>
    <property type="match status" value="1"/>
</dbReference>
<dbReference type="NCBIfam" id="TIGR00177">
    <property type="entry name" value="molyb_syn"/>
    <property type="match status" value="1"/>
</dbReference>
<dbReference type="NCBIfam" id="TIGR00199">
    <property type="entry name" value="PncC_domain"/>
    <property type="match status" value="1"/>
</dbReference>
<dbReference type="NCBIfam" id="NF001813">
    <property type="entry name" value="PRK00549.1"/>
    <property type="match status" value="1"/>
</dbReference>
<dbReference type="PANTHER" id="PTHR13939">
    <property type="entry name" value="NICOTINAMIDE-NUCLEOTIDE AMIDOHYDROLASE PNCC"/>
    <property type="match status" value="1"/>
</dbReference>
<dbReference type="PANTHER" id="PTHR13939:SF0">
    <property type="entry name" value="NMN AMIDOHYDROLASE-LIKE PROTEIN YFAY"/>
    <property type="match status" value="1"/>
</dbReference>
<dbReference type="Pfam" id="PF02464">
    <property type="entry name" value="CinA"/>
    <property type="match status" value="1"/>
</dbReference>
<dbReference type="Pfam" id="PF18146">
    <property type="entry name" value="CinA_KH"/>
    <property type="match status" value="1"/>
</dbReference>
<dbReference type="Pfam" id="PF00994">
    <property type="entry name" value="MoCF_biosynth"/>
    <property type="match status" value="1"/>
</dbReference>
<dbReference type="PIRSF" id="PIRSF006728">
    <property type="entry name" value="CinA"/>
    <property type="match status" value="1"/>
</dbReference>
<dbReference type="SMART" id="SM00852">
    <property type="entry name" value="MoCF_biosynth"/>
    <property type="match status" value="1"/>
</dbReference>
<dbReference type="SUPFAM" id="SSF142433">
    <property type="entry name" value="CinA-like"/>
    <property type="match status" value="1"/>
</dbReference>
<dbReference type="SUPFAM" id="SSF53218">
    <property type="entry name" value="Molybdenum cofactor biosynthesis proteins"/>
    <property type="match status" value="1"/>
</dbReference>
<name>CINA_BACC0</name>
<evidence type="ECO:0000255" key="1">
    <source>
        <dbReference type="HAMAP-Rule" id="MF_00226"/>
    </source>
</evidence>
<organism>
    <name type="scientific">Bacillus cereus (strain AH820)</name>
    <dbReference type="NCBI Taxonomy" id="405535"/>
    <lineage>
        <taxon>Bacteria</taxon>
        <taxon>Bacillati</taxon>
        <taxon>Bacillota</taxon>
        <taxon>Bacilli</taxon>
        <taxon>Bacillales</taxon>
        <taxon>Bacillaceae</taxon>
        <taxon>Bacillus</taxon>
        <taxon>Bacillus cereus group</taxon>
    </lineage>
</organism>
<accession>B7JJ59</accession>
<comment type="similarity">
    <text evidence="1">Belongs to the CinA family.</text>
</comment>
<proteinExistence type="inferred from homology"/>
<reference key="1">
    <citation type="submission" date="2008-10" db="EMBL/GenBank/DDBJ databases">
        <title>Genome sequence of Bacillus cereus AH820.</title>
        <authorList>
            <person name="Dodson R.J."/>
            <person name="Durkin A.S."/>
            <person name="Rosovitz M.J."/>
            <person name="Rasko D.A."/>
            <person name="Hoffmaster A."/>
            <person name="Ravel J."/>
            <person name="Sutton G."/>
        </authorList>
    </citation>
    <scope>NUCLEOTIDE SEQUENCE [LARGE SCALE GENOMIC DNA]</scope>
    <source>
        <strain>AH820</strain>
    </source>
</reference>
<protein>
    <recommendedName>
        <fullName evidence="1">Putative competence-damage inducible protein</fullName>
    </recommendedName>
</protein>
<feature type="chain" id="PRO_1000118913" description="Putative competence-damage inducible protein">
    <location>
        <begin position="1"/>
        <end position="412"/>
    </location>
</feature>
<sequence length="412" mass="45412">MNAEIIAVGTELLLGQIANTNAQFLSEKLASIGINVYYHTVVGDNNKRLQQAIEVAEERADMLIFTGGLGPTKDDLTKETIASSLAEELVYDEKALASISDYFKRTGREFTENNKKQALVLDGATVFANDHGMAPGMGLNKNGKVYILLPGPPKEMKPMYVSYVEPFLRNFTTGENIYSRVLRFFGIGESQLEVKVQDLIDGQTNPTIAPLANDGEVTLRLTAKHQNVDEAEKLIQHVEDLILERVGEFFYGYDQEFLHDKAIELLKKKGLTLACAESLTGGLFGNQVTESAGVSSVFKGGVICYHNDVKQHVLHVPEEVLFTDGAVSKECARYLAENVKELLEADIGISFTGVAGPDASEHKEPGTVFVGLAIKDEPTVVFPLNLSGSRQQIRERSAKYGFYHLYKKLEEI</sequence>
<gene>
    <name evidence="1" type="primary">cinA</name>
    <name type="ordered locus">BCAH820_3793</name>
</gene>